<name>ERPA_ACIBY</name>
<gene>
    <name evidence="1" type="primary">erpA</name>
    <name type="ordered locus">ABAYE0011</name>
</gene>
<dbReference type="EMBL" id="CU459141">
    <property type="protein sequence ID" value="CAM85003.1"/>
    <property type="molecule type" value="Genomic_DNA"/>
</dbReference>
<dbReference type="RefSeq" id="WP_000993572.1">
    <property type="nucleotide sequence ID" value="NZ_JBDGFB010000009.1"/>
</dbReference>
<dbReference type="SMR" id="B0VAE9"/>
<dbReference type="EnsemblBacteria" id="CAM85003">
    <property type="protein sequence ID" value="CAM85003"/>
    <property type="gene ID" value="ABAYE0011"/>
</dbReference>
<dbReference type="GeneID" id="92891930"/>
<dbReference type="KEGG" id="aby:ABAYE0011"/>
<dbReference type="HOGENOM" id="CLU_069054_5_3_6"/>
<dbReference type="GO" id="GO:0051537">
    <property type="term" value="F:2 iron, 2 sulfur cluster binding"/>
    <property type="evidence" value="ECO:0007669"/>
    <property type="project" value="TreeGrafter"/>
</dbReference>
<dbReference type="GO" id="GO:0051539">
    <property type="term" value="F:4 iron, 4 sulfur cluster binding"/>
    <property type="evidence" value="ECO:0007669"/>
    <property type="project" value="TreeGrafter"/>
</dbReference>
<dbReference type="GO" id="GO:0005506">
    <property type="term" value="F:iron ion binding"/>
    <property type="evidence" value="ECO:0007669"/>
    <property type="project" value="UniProtKB-UniRule"/>
</dbReference>
<dbReference type="GO" id="GO:0016226">
    <property type="term" value="P:iron-sulfur cluster assembly"/>
    <property type="evidence" value="ECO:0007669"/>
    <property type="project" value="UniProtKB-UniRule"/>
</dbReference>
<dbReference type="FunFam" id="2.60.300.12:FF:000002">
    <property type="entry name" value="Iron-sulfur cluster insertion protein ErpA"/>
    <property type="match status" value="1"/>
</dbReference>
<dbReference type="Gene3D" id="2.60.300.12">
    <property type="entry name" value="HesB-like domain"/>
    <property type="match status" value="1"/>
</dbReference>
<dbReference type="HAMAP" id="MF_01380">
    <property type="entry name" value="Fe_S_insert_ErpA"/>
    <property type="match status" value="1"/>
</dbReference>
<dbReference type="InterPro" id="IPR000361">
    <property type="entry name" value="FeS_biogenesis"/>
</dbReference>
<dbReference type="InterPro" id="IPR016092">
    <property type="entry name" value="FeS_cluster_insertion"/>
</dbReference>
<dbReference type="InterPro" id="IPR017870">
    <property type="entry name" value="FeS_cluster_insertion_CS"/>
</dbReference>
<dbReference type="InterPro" id="IPR023063">
    <property type="entry name" value="FeS_cluster_insertion_RrpA"/>
</dbReference>
<dbReference type="InterPro" id="IPR035903">
    <property type="entry name" value="HesB-like_dom_sf"/>
</dbReference>
<dbReference type="NCBIfam" id="TIGR00049">
    <property type="entry name" value="iron-sulfur cluster assembly accessory protein"/>
    <property type="match status" value="1"/>
</dbReference>
<dbReference type="NCBIfam" id="NF010147">
    <property type="entry name" value="PRK13623.1"/>
    <property type="match status" value="1"/>
</dbReference>
<dbReference type="PANTHER" id="PTHR43011">
    <property type="entry name" value="IRON-SULFUR CLUSTER ASSEMBLY 2 HOMOLOG, MITOCHONDRIAL"/>
    <property type="match status" value="1"/>
</dbReference>
<dbReference type="PANTHER" id="PTHR43011:SF1">
    <property type="entry name" value="IRON-SULFUR CLUSTER ASSEMBLY 2 HOMOLOG, MITOCHONDRIAL"/>
    <property type="match status" value="1"/>
</dbReference>
<dbReference type="Pfam" id="PF01521">
    <property type="entry name" value="Fe-S_biosyn"/>
    <property type="match status" value="1"/>
</dbReference>
<dbReference type="SUPFAM" id="SSF89360">
    <property type="entry name" value="HesB-like domain"/>
    <property type="match status" value="1"/>
</dbReference>
<dbReference type="PROSITE" id="PS01152">
    <property type="entry name" value="HESB"/>
    <property type="match status" value="1"/>
</dbReference>
<sequence length="111" mass="11927">MNAQALVLTDNAANKVRQLRDSEGNDDLMLRVYVTGGGCSGFSYGFNFAESVNEDDAEFVNGDVKMLVDSLSYQYLVGSVVDYVEGLEGSRFIVQNPNATTTCGCGSSFSI</sequence>
<reference key="1">
    <citation type="journal article" date="2008" name="PLoS ONE">
        <title>Comparative analysis of Acinetobacters: three genomes for three lifestyles.</title>
        <authorList>
            <person name="Vallenet D."/>
            <person name="Nordmann P."/>
            <person name="Barbe V."/>
            <person name="Poirel L."/>
            <person name="Mangenot S."/>
            <person name="Bataille E."/>
            <person name="Dossat C."/>
            <person name="Gas S."/>
            <person name="Kreimeyer A."/>
            <person name="Lenoble P."/>
            <person name="Oztas S."/>
            <person name="Poulain J."/>
            <person name="Segurens B."/>
            <person name="Robert C."/>
            <person name="Abergel C."/>
            <person name="Claverie J.-M."/>
            <person name="Raoult D."/>
            <person name="Medigue C."/>
            <person name="Weissenbach J."/>
            <person name="Cruveiller S."/>
        </authorList>
    </citation>
    <scope>NUCLEOTIDE SEQUENCE [LARGE SCALE GENOMIC DNA]</scope>
    <source>
        <strain>AYE</strain>
    </source>
</reference>
<protein>
    <recommendedName>
        <fullName evidence="1">Iron-sulfur cluster insertion protein ErpA</fullName>
    </recommendedName>
</protein>
<evidence type="ECO:0000255" key="1">
    <source>
        <dbReference type="HAMAP-Rule" id="MF_01380"/>
    </source>
</evidence>
<proteinExistence type="inferred from homology"/>
<feature type="chain" id="PRO_1000144889" description="Iron-sulfur cluster insertion protein ErpA">
    <location>
        <begin position="1"/>
        <end position="111"/>
    </location>
</feature>
<feature type="binding site" evidence="1">
    <location>
        <position position="39"/>
    </location>
    <ligand>
        <name>iron-sulfur cluster</name>
        <dbReference type="ChEBI" id="CHEBI:30408"/>
    </ligand>
</feature>
<feature type="binding site" evidence="1">
    <location>
        <position position="103"/>
    </location>
    <ligand>
        <name>iron-sulfur cluster</name>
        <dbReference type="ChEBI" id="CHEBI:30408"/>
    </ligand>
</feature>
<feature type="binding site" evidence="1">
    <location>
        <position position="105"/>
    </location>
    <ligand>
        <name>iron-sulfur cluster</name>
        <dbReference type="ChEBI" id="CHEBI:30408"/>
    </ligand>
</feature>
<organism>
    <name type="scientific">Acinetobacter baumannii (strain AYE)</name>
    <dbReference type="NCBI Taxonomy" id="509173"/>
    <lineage>
        <taxon>Bacteria</taxon>
        <taxon>Pseudomonadati</taxon>
        <taxon>Pseudomonadota</taxon>
        <taxon>Gammaproteobacteria</taxon>
        <taxon>Moraxellales</taxon>
        <taxon>Moraxellaceae</taxon>
        <taxon>Acinetobacter</taxon>
        <taxon>Acinetobacter calcoaceticus/baumannii complex</taxon>
    </lineage>
</organism>
<keyword id="KW-0408">Iron</keyword>
<keyword id="KW-0411">Iron-sulfur</keyword>
<keyword id="KW-0479">Metal-binding</keyword>
<accession>B0VAE9</accession>
<comment type="function">
    <text evidence="1">Required for insertion of 4Fe-4S clusters for at least IspG.</text>
</comment>
<comment type="cofactor">
    <cofactor evidence="1">
        <name>iron-sulfur cluster</name>
        <dbReference type="ChEBI" id="CHEBI:30408"/>
    </cofactor>
    <text evidence="1">Binds 1 iron-sulfur cluster per subunit.</text>
</comment>
<comment type="subunit">
    <text evidence="1">Homodimer.</text>
</comment>
<comment type="similarity">
    <text evidence="1">Belongs to the HesB/IscA family.</text>
</comment>